<keyword id="KW-0066">ATP synthesis</keyword>
<keyword id="KW-0375">Hydrogen ion transport</keyword>
<keyword id="KW-0406">Ion transport</keyword>
<keyword id="KW-1185">Reference proteome</keyword>
<keyword id="KW-0813">Transport</keyword>
<gene>
    <name evidence="1" type="primary">atpB</name>
    <name type="ordered locus">Adeh_1203</name>
</gene>
<sequence>MDLVTRRIRGALGIAGPLLFLEGVPRARLGEVVRIRGEPEASGRAAEERSGQVIALSRDRIAVQVLEETRGLAPARSEVTLTGQVARLGVARGMLGRVLDGLGRPADGLPPPVPEARPAIHGAALNVTRREKPSDFIETGVSAIDGMNTLVRGQKLPVFSCAGLPASRLAAQIVCQARVRGGEPFAVVFAAMGSPFREYHAFLEAFRAAGVLDRTVVFLNRAEDPPIERLMTPRCALTCAEHLAFTHGLHVLVVLTDVTSYCEALREVALAREEVPGRRGYPGYMYTDLATIFERAGRVRGRPGSLTQLPVLTMPDDDLTHPIPDLTGYITEGQIVLSRDLDRRGVYPPIDVLPSLSRLMGLGAGPGKTRDDHRPVADQLYAFYARGRDVRRMAAIVGAANLGEEEKRLLAFADAFEDGLVGQGGTFRTIEDTLEAGWRLLSGFPPAALTRIPERLLRARPAQPAAAATSGGAIA</sequence>
<name>VATB_ANADE</name>
<dbReference type="EMBL" id="CP000251">
    <property type="protein sequence ID" value="ABC80977.1"/>
    <property type="molecule type" value="Genomic_DNA"/>
</dbReference>
<dbReference type="RefSeq" id="WP_011420260.1">
    <property type="nucleotide sequence ID" value="NC_007760.1"/>
</dbReference>
<dbReference type="SMR" id="Q2IQ94"/>
<dbReference type="STRING" id="290397.Adeh_1203"/>
<dbReference type="KEGG" id="ade:Adeh_1203"/>
<dbReference type="eggNOG" id="COG1156">
    <property type="taxonomic scope" value="Bacteria"/>
</dbReference>
<dbReference type="HOGENOM" id="CLU_022916_0_0_7"/>
<dbReference type="OrthoDB" id="9801639at2"/>
<dbReference type="Proteomes" id="UP000001935">
    <property type="component" value="Chromosome"/>
</dbReference>
<dbReference type="GO" id="GO:0005524">
    <property type="term" value="F:ATP binding"/>
    <property type="evidence" value="ECO:0007669"/>
    <property type="project" value="UniProtKB-UniRule"/>
</dbReference>
<dbReference type="GO" id="GO:0046933">
    <property type="term" value="F:proton-transporting ATP synthase activity, rotational mechanism"/>
    <property type="evidence" value="ECO:0007669"/>
    <property type="project" value="UniProtKB-UniRule"/>
</dbReference>
<dbReference type="GO" id="GO:0042777">
    <property type="term" value="P:proton motive force-driven plasma membrane ATP synthesis"/>
    <property type="evidence" value="ECO:0007669"/>
    <property type="project" value="UniProtKB-UniRule"/>
</dbReference>
<dbReference type="CDD" id="cd18112">
    <property type="entry name" value="ATP-synt_V_A-type_beta_C"/>
    <property type="match status" value="1"/>
</dbReference>
<dbReference type="CDD" id="cd18118">
    <property type="entry name" value="ATP-synt_V_A-type_beta_N"/>
    <property type="match status" value="1"/>
</dbReference>
<dbReference type="CDD" id="cd01135">
    <property type="entry name" value="V_A-ATPase_B"/>
    <property type="match status" value="1"/>
</dbReference>
<dbReference type="Gene3D" id="3.40.50.12240">
    <property type="match status" value="1"/>
</dbReference>
<dbReference type="HAMAP" id="MF_00310">
    <property type="entry name" value="ATP_synth_B_arch"/>
    <property type="match status" value="1"/>
</dbReference>
<dbReference type="InterPro" id="IPR055190">
    <property type="entry name" value="ATP-synt_VA_C"/>
</dbReference>
<dbReference type="InterPro" id="IPR020003">
    <property type="entry name" value="ATPase_a/bsu_AS"/>
</dbReference>
<dbReference type="InterPro" id="IPR004100">
    <property type="entry name" value="ATPase_F1/V1/A1_a/bsu_N"/>
</dbReference>
<dbReference type="InterPro" id="IPR000194">
    <property type="entry name" value="ATPase_F1/V1/A1_a/bsu_nucl-bd"/>
</dbReference>
<dbReference type="InterPro" id="IPR027417">
    <property type="entry name" value="P-loop_NTPase"/>
</dbReference>
<dbReference type="InterPro" id="IPR022879">
    <property type="entry name" value="V-ATPase_su_B/beta"/>
</dbReference>
<dbReference type="NCBIfam" id="NF003235">
    <property type="entry name" value="PRK04196.1"/>
    <property type="match status" value="1"/>
</dbReference>
<dbReference type="PANTHER" id="PTHR43389">
    <property type="entry name" value="V-TYPE PROTON ATPASE SUBUNIT B"/>
    <property type="match status" value="1"/>
</dbReference>
<dbReference type="PANTHER" id="PTHR43389:SF4">
    <property type="entry name" value="V-TYPE PROTON ATPASE SUBUNIT B"/>
    <property type="match status" value="1"/>
</dbReference>
<dbReference type="Pfam" id="PF00006">
    <property type="entry name" value="ATP-synt_ab"/>
    <property type="match status" value="1"/>
</dbReference>
<dbReference type="Pfam" id="PF02874">
    <property type="entry name" value="ATP-synt_ab_N"/>
    <property type="match status" value="1"/>
</dbReference>
<dbReference type="Pfam" id="PF22919">
    <property type="entry name" value="ATP-synt_VA_C"/>
    <property type="match status" value="1"/>
</dbReference>
<dbReference type="SUPFAM" id="SSF47917">
    <property type="entry name" value="C-terminal domain of alpha and beta subunits of F1 ATP synthase"/>
    <property type="match status" value="1"/>
</dbReference>
<dbReference type="SUPFAM" id="SSF52540">
    <property type="entry name" value="P-loop containing nucleoside triphosphate hydrolases"/>
    <property type="match status" value="1"/>
</dbReference>
<dbReference type="PROSITE" id="PS00152">
    <property type="entry name" value="ATPASE_ALPHA_BETA"/>
    <property type="match status" value="1"/>
</dbReference>
<feature type="chain" id="PRO_1000059363" description="V-type ATP synthase beta chain">
    <location>
        <begin position="1"/>
        <end position="475"/>
    </location>
</feature>
<evidence type="ECO:0000255" key="1">
    <source>
        <dbReference type="HAMAP-Rule" id="MF_00310"/>
    </source>
</evidence>
<protein>
    <recommendedName>
        <fullName evidence="1">V-type ATP synthase beta chain</fullName>
    </recommendedName>
    <alternativeName>
        <fullName evidence="1">V-ATPase subunit B</fullName>
    </alternativeName>
</protein>
<accession>Q2IQ94</accession>
<proteinExistence type="inferred from homology"/>
<organism>
    <name type="scientific">Anaeromyxobacter dehalogenans (strain 2CP-C)</name>
    <dbReference type="NCBI Taxonomy" id="290397"/>
    <lineage>
        <taxon>Bacteria</taxon>
        <taxon>Pseudomonadati</taxon>
        <taxon>Myxococcota</taxon>
        <taxon>Myxococcia</taxon>
        <taxon>Myxococcales</taxon>
        <taxon>Cystobacterineae</taxon>
        <taxon>Anaeromyxobacteraceae</taxon>
        <taxon>Anaeromyxobacter</taxon>
    </lineage>
</organism>
<reference key="1">
    <citation type="submission" date="2006-01" db="EMBL/GenBank/DDBJ databases">
        <title>Complete sequence of Anaeromyxobacter dehalogenans 2CP-C.</title>
        <authorList>
            <person name="Copeland A."/>
            <person name="Lucas S."/>
            <person name="Lapidus A."/>
            <person name="Barry K."/>
            <person name="Detter J.C."/>
            <person name="Glavina T."/>
            <person name="Hammon N."/>
            <person name="Israni S."/>
            <person name="Pitluck S."/>
            <person name="Brettin T."/>
            <person name="Bruce D."/>
            <person name="Han C."/>
            <person name="Tapia R."/>
            <person name="Gilna P."/>
            <person name="Kiss H."/>
            <person name="Schmutz J."/>
            <person name="Larimer F."/>
            <person name="Land M."/>
            <person name="Kyrpides N."/>
            <person name="Anderson I."/>
            <person name="Sanford R.A."/>
            <person name="Ritalahti K.M."/>
            <person name="Thomas H.S."/>
            <person name="Kirby J.R."/>
            <person name="Zhulin I.B."/>
            <person name="Loeffler F.E."/>
            <person name="Richardson P."/>
        </authorList>
    </citation>
    <scope>NUCLEOTIDE SEQUENCE [LARGE SCALE GENOMIC DNA]</scope>
    <source>
        <strain>2CP-C</strain>
    </source>
</reference>
<comment type="function">
    <text evidence="1">Produces ATP from ADP in the presence of a proton gradient across the membrane. The V-type beta chain is a regulatory subunit.</text>
</comment>
<comment type="similarity">
    <text evidence="1">Belongs to the ATPase alpha/beta chains family.</text>
</comment>